<sequence length="293" mass="31722">MPELPEVETVRRGLEPAMAGARIDGFEARRADLRFALQPDLATRLIGQTVKGLGRRAKYLLAELSSGDVLLMHLGMSGSFRVLQGEASGAPGAFHHPRNDDRAHDHVVFRMSNGAVVVFNDPRRFGYMKILAPGEIADEPFLKGLGPEPLGNSFDAAMLASACAGRKTSLKAALLDQRVVAGLGNIYVCEALFGAHLSPKRLAATLATRTGAPTERAERLVEAIRAVLHAAIKAGGSSLRDHRQTSGELGYFQHSFAVYDREGEPCRSKGCDGVVKRFVQNGRSTFWCPKCQK</sequence>
<dbReference type="EC" id="3.2.2.23" evidence="2"/>
<dbReference type="EC" id="4.2.99.18" evidence="2"/>
<dbReference type="EMBL" id="CP000301">
    <property type="protein sequence ID" value="ABD85952.1"/>
    <property type="molecule type" value="Genomic_DNA"/>
</dbReference>
<dbReference type="SMR" id="Q21CD4"/>
<dbReference type="STRING" id="316056.RPC_0377"/>
<dbReference type="KEGG" id="rpc:RPC_0377"/>
<dbReference type="eggNOG" id="COG0266">
    <property type="taxonomic scope" value="Bacteria"/>
</dbReference>
<dbReference type="HOGENOM" id="CLU_038423_1_1_5"/>
<dbReference type="OrthoDB" id="9800855at2"/>
<dbReference type="GO" id="GO:0034039">
    <property type="term" value="F:8-oxo-7,8-dihydroguanine DNA N-glycosylase activity"/>
    <property type="evidence" value="ECO:0007669"/>
    <property type="project" value="TreeGrafter"/>
</dbReference>
<dbReference type="GO" id="GO:0140078">
    <property type="term" value="F:class I DNA-(apurinic or apyrimidinic site) endonuclease activity"/>
    <property type="evidence" value="ECO:0007669"/>
    <property type="project" value="UniProtKB-EC"/>
</dbReference>
<dbReference type="GO" id="GO:0003684">
    <property type="term" value="F:damaged DNA binding"/>
    <property type="evidence" value="ECO:0007669"/>
    <property type="project" value="InterPro"/>
</dbReference>
<dbReference type="GO" id="GO:0008270">
    <property type="term" value="F:zinc ion binding"/>
    <property type="evidence" value="ECO:0007669"/>
    <property type="project" value="UniProtKB-UniRule"/>
</dbReference>
<dbReference type="GO" id="GO:0006284">
    <property type="term" value="P:base-excision repair"/>
    <property type="evidence" value="ECO:0007669"/>
    <property type="project" value="InterPro"/>
</dbReference>
<dbReference type="CDD" id="cd08966">
    <property type="entry name" value="EcFpg-like_N"/>
    <property type="match status" value="1"/>
</dbReference>
<dbReference type="FunFam" id="1.10.8.50:FF:000003">
    <property type="entry name" value="Formamidopyrimidine-DNA glycosylase"/>
    <property type="match status" value="1"/>
</dbReference>
<dbReference type="FunFam" id="3.20.190.10:FF:000001">
    <property type="entry name" value="Formamidopyrimidine-DNA glycosylase"/>
    <property type="match status" value="1"/>
</dbReference>
<dbReference type="Gene3D" id="1.10.8.50">
    <property type="match status" value="1"/>
</dbReference>
<dbReference type="Gene3D" id="3.20.190.10">
    <property type="entry name" value="MutM-like, N-terminal"/>
    <property type="match status" value="1"/>
</dbReference>
<dbReference type="HAMAP" id="MF_00103">
    <property type="entry name" value="Fapy_DNA_glycosyl"/>
    <property type="match status" value="1"/>
</dbReference>
<dbReference type="InterPro" id="IPR015886">
    <property type="entry name" value="DNA_glyclase/AP_lyase_DNA-bd"/>
</dbReference>
<dbReference type="InterPro" id="IPR020629">
    <property type="entry name" value="Formamido-pyr_DNA_Glyclase"/>
</dbReference>
<dbReference type="InterPro" id="IPR012319">
    <property type="entry name" value="FPG_cat"/>
</dbReference>
<dbReference type="InterPro" id="IPR035937">
    <property type="entry name" value="MutM-like_N-ter"/>
</dbReference>
<dbReference type="InterPro" id="IPR010979">
    <property type="entry name" value="Ribosomal_uS13-like_H2TH"/>
</dbReference>
<dbReference type="InterPro" id="IPR000214">
    <property type="entry name" value="Znf_DNA_glyclase/AP_lyase"/>
</dbReference>
<dbReference type="InterPro" id="IPR010663">
    <property type="entry name" value="Znf_FPG/IleRS"/>
</dbReference>
<dbReference type="NCBIfam" id="TIGR00577">
    <property type="entry name" value="fpg"/>
    <property type="match status" value="1"/>
</dbReference>
<dbReference type="NCBIfam" id="NF002211">
    <property type="entry name" value="PRK01103.1"/>
    <property type="match status" value="1"/>
</dbReference>
<dbReference type="PANTHER" id="PTHR22993">
    <property type="entry name" value="FORMAMIDOPYRIMIDINE-DNA GLYCOSYLASE"/>
    <property type="match status" value="1"/>
</dbReference>
<dbReference type="PANTHER" id="PTHR22993:SF9">
    <property type="entry name" value="FORMAMIDOPYRIMIDINE-DNA GLYCOSYLASE"/>
    <property type="match status" value="1"/>
</dbReference>
<dbReference type="Pfam" id="PF01149">
    <property type="entry name" value="Fapy_DNA_glyco"/>
    <property type="match status" value="1"/>
</dbReference>
<dbReference type="Pfam" id="PF06831">
    <property type="entry name" value="H2TH"/>
    <property type="match status" value="1"/>
</dbReference>
<dbReference type="Pfam" id="PF06827">
    <property type="entry name" value="zf-FPG_IleRS"/>
    <property type="match status" value="1"/>
</dbReference>
<dbReference type="SMART" id="SM00898">
    <property type="entry name" value="Fapy_DNA_glyco"/>
    <property type="match status" value="1"/>
</dbReference>
<dbReference type="SMART" id="SM01232">
    <property type="entry name" value="H2TH"/>
    <property type="match status" value="1"/>
</dbReference>
<dbReference type="SUPFAM" id="SSF57716">
    <property type="entry name" value="Glucocorticoid receptor-like (DNA-binding domain)"/>
    <property type="match status" value="1"/>
</dbReference>
<dbReference type="SUPFAM" id="SSF81624">
    <property type="entry name" value="N-terminal domain of MutM-like DNA repair proteins"/>
    <property type="match status" value="1"/>
</dbReference>
<dbReference type="SUPFAM" id="SSF46946">
    <property type="entry name" value="S13-like H2TH domain"/>
    <property type="match status" value="1"/>
</dbReference>
<dbReference type="PROSITE" id="PS51068">
    <property type="entry name" value="FPG_CAT"/>
    <property type="match status" value="1"/>
</dbReference>
<dbReference type="PROSITE" id="PS51066">
    <property type="entry name" value="ZF_FPG_2"/>
    <property type="match status" value="1"/>
</dbReference>
<comment type="function">
    <text evidence="2">Involved in base excision repair of DNA damaged by oxidation or by mutagenic agents. Acts as a DNA glycosylase that recognizes and removes damaged bases. Has a preference for oxidized purines, such as 7,8-dihydro-8-oxoguanine (8-oxoG). Has AP (apurinic/apyrimidinic) lyase activity and introduces nicks in the DNA strand. Cleaves the DNA backbone by beta-delta elimination to generate a single-strand break at the site of the removed base with both 3'- and 5'-phosphates.</text>
</comment>
<comment type="catalytic activity">
    <reaction evidence="2">
        <text>Hydrolysis of DNA containing ring-opened 7-methylguanine residues, releasing 2,6-diamino-4-hydroxy-5-(N-methyl)formamidopyrimidine.</text>
        <dbReference type="EC" id="3.2.2.23"/>
    </reaction>
</comment>
<comment type="catalytic activity">
    <reaction evidence="2">
        <text>2'-deoxyribonucleotide-(2'-deoxyribose 5'-phosphate)-2'-deoxyribonucleotide-DNA = a 3'-end 2'-deoxyribonucleotide-(2,3-dehydro-2,3-deoxyribose 5'-phosphate)-DNA + a 5'-end 5'-phospho-2'-deoxyribonucleoside-DNA + H(+)</text>
        <dbReference type="Rhea" id="RHEA:66592"/>
        <dbReference type="Rhea" id="RHEA-COMP:13180"/>
        <dbReference type="Rhea" id="RHEA-COMP:16897"/>
        <dbReference type="Rhea" id="RHEA-COMP:17067"/>
        <dbReference type="ChEBI" id="CHEBI:15378"/>
        <dbReference type="ChEBI" id="CHEBI:136412"/>
        <dbReference type="ChEBI" id="CHEBI:157695"/>
        <dbReference type="ChEBI" id="CHEBI:167181"/>
        <dbReference type="EC" id="4.2.99.18"/>
    </reaction>
</comment>
<comment type="cofactor">
    <cofactor evidence="2">
        <name>Zn(2+)</name>
        <dbReference type="ChEBI" id="CHEBI:29105"/>
    </cofactor>
    <text evidence="2">Binds 1 zinc ion per subunit.</text>
</comment>
<comment type="subunit">
    <text evidence="2">Monomer.</text>
</comment>
<comment type="similarity">
    <text evidence="2">Belongs to the FPG family.</text>
</comment>
<accession>Q21CD4</accession>
<keyword id="KW-0227">DNA damage</keyword>
<keyword id="KW-0234">DNA repair</keyword>
<keyword id="KW-0238">DNA-binding</keyword>
<keyword id="KW-0326">Glycosidase</keyword>
<keyword id="KW-0378">Hydrolase</keyword>
<keyword id="KW-0456">Lyase</keyword>
<keyword id="KW-0479">Metal-binding</keyword>
<keyword id="KW-0511">Multifunctional enzyme</keyword>
<keyword id="KW-0862">Zinc</keyword>
<keyword id="KW-0863">Zinc-finger</keyword>
<organism>
    <name type="scientific">Rhodopseudomonas palustris (strain BisB18)</name>
    <dbReference type="NCBI Taxonomy" id="316056"/>
    <lineage>
        <taxon>Bacteria</taxon>
        <taxon>Pseudomonadati</taxon>
        <taxon>Pseudomonadota</taxon>
        <taxon>Alphaproteobacteria</taxon>
        <taxon>Hyphomicrobiales</taxon>
        <taxon>Nitrobacteraceae</taxon>
        <taxon>Rhodopseudomonas</taxon>
    </lineage>
</organism>
<reference key="1">
    <citation type="submission" date="2006-03" db="EMBL/GenBank/DDBJ databases">
        <title>Complete sequence of Rhodopseudomonas palustris BisB18.</title>
        <authorList>
            <consortium name="US DOE Joint Genome Institute"/>
            <person name="Copeland A."/>
            <person name="Lucas S."/>
            <person name="Lapidus A."/>
            <person name="Barry K."/>
            <person name="Detter J.C."/>
            <person name="Glavina del Rio T."/>
            <person name="Hammon N."/>
            <person name="Israni S."/>
            <person name="Dalin E."/>
            <person name="Tice H."/>
            <person name="Pitluck S."/>
            <person name="Chain P."/>
            <person name="Malfatti S."/>
            <person name="Shin M."/>
            <person name="Vergez L."/>
            <person name="Schmutz J."/>
            <person name="Larimer F."/>
            <person name="Land M."/>
            <person name="Hauser L."/>
            <person name="Pelletier D.A."/>
            <person name="Kyrpides N."/>
            <person name="Anderson I."/>
            <person name="Oda Y."/>
            <person name="Harwood C.S."/>
            <person name="Richardson P."/>
        </authorList>
    </citation>
    <scope>NUCLEOTIDE SEQUENCE [LARGE SCALE GENOMIC DNA]</scope>
    <source>
        <strain>BisB18</strain>
    </source>
</reference>
<name>FPG_RHOPB</name>
<evidence type="ECO:0000250" key="1"/>
<evidence type="ECO:0000255" key="2">
    <source>
        <dbReference type="HAMAP-Rule" id="MF_00103"/>
    </source>
</evidence>
<feature type="initiator methionine" description="Removed" evidence="1">
    <location>
        <position position="1"/>
    </location>
</feature>
<feature type="chain" id="PRO_1000008755" description="Formamidopyrimidine-DNA glycosylase">
    <location>
        <begin position="2"/>
        <end position="293"/>
    </location>
</feature>
<feature type="zinc finger region" description="FPG-type" evidence="2">
    <location>
        <begin position="257"/>
        <end position="293"/>
    </location>
</feature>
<feature type="active site" description="Schiff-base intermediate with DNA" evidence="2">
    <location>
        <position position="2"/>
    </location>
</feature>
<feature type="active site" description="Proton donor" evidence="2">
    <location>
        <position position="3"/>
    </location>
</feature>
<feature type="active site" description="Proton donor; for beta-elimination activity" evidence="2">
    <location>
        <position position="58"/>
    </location>
</feature>
<feature type="active site" description="Proton donor; for delta-elimination activity" evidence="2">
    <location>
        <position position="283"/>
    </location>
</feature>
<feature type="binding site" evidence="2">
    <location>
        <position position="104"/>
    </location>
    <ligand>
        <name>DNA</name>
        <dbReference type="ChEBI" id="CHEBI:16991"/>
    </ligand>
</feature>
<feature type="binding site" evidence="2">
    <location>
        <position position="123"/>
    </location>
    <ligand>
        <name>DNA</name>
        <dbReference type="ChEBI" id="CHEBI:16991"/>
    </ligand>
</feature>
<feature type="binding site" evidence="2">
    <location>
        <position position="166"/>
    </location>
    <ligand>
        <name>DNA</name>
        <dbReference type="ChEBI" id="CHEBI:16991"/>
    </ligand>
</feature>
<gene>
    <name evidence="2" type="primary">mutM</name>
    <name evidence="2" type="synonym">fpg</name>
    <name type="ordered locus">RPC_0377</name>
</gene>
<protein>
    <recommendedName>
        <fullName evidence="2">Formamidopyrimidine-DNA glycosylase</fullName>
        <shortName evidence="2">Fapy-DNA glycosylase</shortName>
        <ecNumber evidence="2">3.2.2.23</ecNumber>
    </recommendedName>
    <alternativeName>
        <fullName evidence="2">DNA-(apurinic or apyrimidinic site) lyase MutM</fullName>
        <shortName evidence="2">AP lyase MutM</shortName>
        <ecNumber evidence="2">4.2.99.18</ecNumber>
    </alternativeName>
</protein>
<proteinExistence type="inferred from homology"/>